<gene>
    <name evidence="1" type="primary">gpsA</name>
    <name type="ordered locus">NMB2060</name>
</gene>
<protein>
    <recommendedName>
        <fullName evidence="1">Glycerol-3-phosphate dehydrogenase [NAD(P)+]</fullName>
        <ecNumber evidence="1">1.1.1.94</ecNumber>
    </recommendedName>
    <alternativeName>
        <fullName evidence="1">NAD(P)(+)-dependent glycerol-3-phosphate dehydrogenase</fullName>
    </alternativeName>
    <alternativeName>
        <fullName evidence="1">NAD(P)H-dependent dihydroxyacetone-phosphate reductase</fullName>
    </alternativeName>
</protein>
<dbReference type="EC" id="1.1.1.94" evidence="1"/>
<dbReference type="EMBL" id="AE002098">
    <property type="protein sequence ID" value="AAF62339.1"/>
    <property type="molecule type" value="Genomic_DNA"/>
</dbReference>
<dbReference type="RefSeq" id="NP_275050.1">
    <property type="nucleotide sequence ID" value="NC_003112.2"/>
</dbReference>
<dbReference type="RefSeq" id="WP_002215013.1">
    <property type="nucleotide sequence ID" value="NC_003112.2"/>
</dbReference>
<dbReference type="SMR" id="Q9JXG6"/>
<dbReference type="FunCoup" id="Q9JXG6">
    <property type="interactions" value="434"/>
</dbReference>
<dbReference type="STRING" id="122586.NMB2060"/>
<dbReference type="PaxDb" id="122586-NMB2060"/>
<dbReference type="KEGG" id="nme:NMB2060"/>
<dbReference type="PATRIC" id="fig|122586.8.peg.2638"/>
<dbReference type="HOGENOM" id="CLU_033449_0_2_4"/>
<dbReference type="InParanoid" id="Q9JXG6"/>
<dbReference type="OrthoDB" id="9812273at2"/>
<dbReference type="UniPathway" id="UPA00940"/>
<dbReference type="Proteomes" id="UP000000425">
    <property type="component" value="Chromosome"/>
</dbReference>
<dbReference type="GO" id="GO:0005829">
    <property type="term" value="C:cytosol"/>
    <property type="evidence" value="ECO:0000318"/>
    <property type="project" value="GO_Central"/>
</dbReference>
<dbReference type="GO" id="GO:0047952">
    <property type="term" value="F:glycerol-3-phosphate dehydrogenase [NAD(P)+] activity"/>
    <property type="evidence" value="ECO:0000318"/>
    <property type="project" value="GO_Central"/>
</dbReference>
<dbReference type="GO" id="GO:0051287">
    <property type="term" value="F:NAD binding"/>
    <property type="evidence" value="ECO:0007669"/>
    <property type="project" value="InterPro"/>
</dbReference>
<dbReference type="GO" id="GO:0005975">
    <property type="term" value="P:carbohydrate metabolic process"/>
    <property type="evidence" value="ECO:0007669"/>
    <property type="project" value="InterPro"/>
</dbReference>
<dbReference type="GO" id="GO:0046167">
    <property type="term" value="P:glycerol-3-phosphate biosynthetic process"/>
    <property type="evidence" value="ECO:0007669"/>
    <property type="project" value="UniProtKB-UniRule"/>
</dbReference>
<dbReference type="GO" id="GO:0046168">
    <property type="term" value="P:glycerol-3-phosphate catabolic process"/>
    <property type="evidence" value="ECO:0007669"/>
    <property type="project" value="InterPro"/>
</dbReference>
<dbReference type="GO" id="GO:0006072">
    <property type="term" value="P:glycerol-3-phosphate metabolic process"/>
    <property type="evidence" value="ECO:0000318"/>
    <property type="project" value="GO_Central"/>
</dbReference>
<dbReference type="GO" id="GO:0006650">
    <property type="term" value="P:glycerophospholipid metabolic process"/>
    <property type="evidence" value="ECO:0007669"/>
    <property type="project" value="UniProtKB-UniRule"/>
</dbReference>
<dbReference type="GO" id="GO:0008654">
    <property type="term" value="P:phospholipid biosynthetic process"/>
    <property type="evidence" value="ECO:0007669"/>
    <property type="project" value="UniProtKB-KW"/>
</dbReference>
<dbReference type="FunFam" id="1.10.1040.10:FF:000001">
    <property type="entry name" value="Glycerol-3-phosphate dehydrogenase [NAD(P)+]"/>
    <property type="match status" value="1"/>
</dbReference>
<dbReference type="FunFam" id="3.40.50.720:FF:000019">
    <property type="entry name" value="Glycerol-3-phosphate dehydrogenase [NAD(P)+]"/>
    <property type="match status" value="1"/>
</dbReference>
<dbReference type="Gene3D" id="1.10.1040.10">
    <property type="entry name" value="N-(1-d-carboxylethyl)-l-norvaline Dehydrogenase, domain 2"/>
    <property type="match status" value="1"/>
</dbReference>
<dbReference type="Gene3D" id="3.40.50.720">
    <property type="entry name" value="NAD(P)-binding Rossmann-like Domain"/>
    <property type="match status" value="1"/>
</dbReference>
<dbReference type="HAMAP" id="MF_00394">
    <property type="entry name" value="NAD_Glyc3P_dehydrog"/>
    <property type="match status" value="1"/>
</dbReference>
<dbReference type="InterPro" id="IPR008927">
    <property type="entry name" value="6-PGluconate_DH-like_C_sf"/>
</dbReference>
<dbReference type="InterPro" id="IPR013328">
    <property type="entry name" value="6PGD_dom2"/>
</dbReference>
<dbReference type="InterPro" id="IPR006168">
    <property type="entry name" value="G3P_DH_NAD-dep"/>
</dbReference>
<dbReference type="InterPro" id="IPR006109">
    <property type="entry name" value="G3P_DH_NAD-dep_C"/>
</dbReference>
<dbReference type="InterPro" id="IPR011128">
    <property type="entry name" value="G3P_DH_NAD-dep_N"/>
</dbReference>
<dbReference type="InterPro" id="IPR036291">
    <property type="entry name" value="NAD(P)-bd_dom_sf"/>
</dbReference>
<dbReference type="NCBIfam" id="NF000940">
    <property type="entry name" value="PRK00094.1-2"/>
    <property type="match status" value="1"/>
</dbReference>
<dbReference type="NCBIfam" id="NF000942">
    <property type="entry name" value="PRK00094.1-4"/>
    <property type="match status" value="1"/>
</dbReference>
<dbReference type="PANTHER" id="PTHR11728">
    <property type="entry name" value="GLYCEROL-3-PHOSPHATE DEHYDROGENASE"/>
    <property type="match status" value="1"/>
</dbReference>
<dbReference type="PANTHER" id="PTHR11728:SF1">
    <property type="entry name" value="GLYCEROL-3-PHOSPHATE DEHYDROGENASE [NAD(+)] 2, CHLOROPLASTIC"/>
    <property type="match status" value="1"/>
</dbReference>
<dbReference type="Pfam" id="PF07479">
    <property type="entry name" value="NAD_Gly3P_dh_C"/>
    <property type="match status" value="1"/>
</dbReference>
<dbReference type="Pfam" id="PF01210">
    <property type="entry name" value="NAD_Gly3P_dh_N"/>
    <property type="match status" value="1"/>
</dbReference>
<dbReference type="PIRSF" id="PIRSF000114">
    <property type="entry name" value="Glycerol-3-P_dh"/>
    <property type="match status" value="1"/>
</dbReference>
<dbReference type="PRINTS" id="PR00077">
    <property type="entry name" value="GPDHDRGNASE"/>
</dbReference>
<dbReference type="SUPFAM" id="SSF48179">
    <property type="entry name" value="6-phosphogluconate dehydrogenase C-terminal domain-like"/>
    <property type="match status" value="1"/>
</dbReference>
<dbReference type="SUPFAM" id="SSF51735">
    <property type="entry name" value="NAD(P)-binding Rossmann-fold domains"/>
    <property type="match status" value="1"/>
</dbReference>
<dbReference type="PROSITE" id="PS00957">
    <property type="entry name" value="NAD_G3PDH"/>
    <property type="match status" value="1"/>
</dbReference>
<name>GPDA_NEIMB</name>
<organism>
    <name type="scientific">Neisseria meningitidis serogroup B (strain ATCC BAA-335 / MC58)</name>
    <dbReference type="NCBI Taxonomy" id="122586"/>
    <lineage>
        <taxon>Bacteria</taxon>
        <taxon>Pseudomonadati</taxon>
        <taxon>Pseudomonadota</taxon>
        <taxon>Betaproteobacteria</taxon>
        <taxon>Neisseriales</taxon>
        <taxon>Neisseriaceae</taxon>
        <taxon>Neisseria</taxon>
    </lineage>
</organism>
<proteinExistence type="inferred from homology"/>
<evidence type="ECO:0000255" key="1">
    <source>
        <dbReference type="HAMAP-Rule" id="MF_00394"/>
    </source>
</evidence>
<accession>Q9JXG6</accession>
<comment type="function">
    <text evidence="1">Catalyzes the reduction of the glycolytic intermediate dihydroxyacetone phosphate (DHAP) to sn-glycerol 3-phosphate (G3P), the key precursor for phospholipid synthesis.</text>
</comment>
<comment type="catalytic activity">
    <reaction evidence="1">
        <text>sn-glycerol 3-phosphate + NAD(+) = dihydroxyacetone phosphate + NADH + H(+)</text>
        <dbReference type="Rhea" id="RHEA:11092"/>
        <dbReference type="ChEBI" id="CHEBI:15378"/>
        <dbReference type="ChEBI" id="CHEBI:57540"/>
        <dbReference type="ChEBI" id="CHEBI:57597"/>
        <dbReference type="ChEBI" id="CHEBI:57642"/>
        <dbReference type="ChEBI" id="CHEBI:57945"/>
        <dbReference type="EC" id="1.1.1.94"/>
    </reaction>
    <physiologicalReaction direction="right-to-left" evidence="1">
        <dbReference type="Rhea" id="RHEA:11094"/>
    </physiologicalReaction>
</comment>
<comment type="catalytic activity">
    <reaction evidence="1">
        <text>sn-glycerol 3-phosphate + NADP(+) = dihydroxyacetone phosphate + NADPH + H(+)</text>
        <dbReference type="Rhea" id="RHEA:11096"/>
        <dbReference type="ChEBI" id="CHEBI:15378"/>
        <dbReference type="ChEBI" id="CHEBI:57597"/>
        <dbReference type="ChEBI" id="CHEBI:57642"/>
        <dbReference type="ChEBI" id="CHEBI:57783"/>
        <dbReference type="ChEBI" id="CHEBI:58349"/>
        <dbReference type="EC" id="1.1.1.94"/>
    </reaction>
    <physiologicalReaction direction="right-to-left" evidence="1">
        <dbReference type="Rhea" id="RHEA:11098"/>
    </physiologicalReaction>
</comment>
<comment type="pathway">
    <text evidence="1">Membrane lipid metabolism; glycerophospholipid metabolism.</text>
</comment>
<comment type="subcellular location">
    <subcellularLocation>
        <location evidence="1">Cytoplasm</location>
    </subcellularLocation>
</comment>
<comment type="similarity">
    <text evidence="1">Belongs to the NAD-dependent glycerol-3-phosphate dehydrogenase family.</text>
</comment>
<keyword id="KW-0963">Cytoplasm</keyword>
<keyword id="KW-0444">Lipid biosynthesis</keyword>
<keyword id="KW-0443">Lipid metabolism</keyword>
<keyword id="KW-0520">NAD</keyword>
<keyword id="KW-0521">NADP</keyword>
<keyword id="KW-0547">Nucleotide-binding</keyword>
<keyword id="KW-0560">Oxidoreductase</keyword>
<keyword id="KW-0594">Phospholipid biosynthesis</keyword>
<keyword id="KW-1208">Phospholipid metabolism</keyword>
<keyword id="KW-1185">Reference proteome</keyword>
<feature type="chain" id="PRO_0000137999" description="Glycerol-3-phosphate dehydrogenase [NAD(P)+]">
    <location>
        <begin position="1"/>
        <end position="329"/>
    </location>
</feature>
<feature type="active site" description="Proton acceptor" evidence="1">
    <location>
        <position position="189"/>
    </location>
</feature>
<feature type="binding site" evidence="1">
    <location>
        <position position="10"/>
    </location>
    <ligand>
        <name>NADPH</name>
        <dbReference type="ChEBI" id="CHEBI:57783"/>
    </ligand>
</feature>
<feature type="binding site" evidence="1">
    <location>
        <position position="11"/>
    </location>
    <ligand>
        <name>NADPH</name>
        <dbReference type="ChEBI" id="CHEBI:57783"/>
    </ligand>
</feature>
<feature type="binding site" evidence="1">
    <location>
        <position position="31"/>
    </location>
    <ligand>
        <name>NADPH</name>
        <dbReference type="ChEBI" id="CHEBI:57783"/>
    </ligand>
</feature>
<feature type="binding site" evidence="1">
    <location>
        <position position="105"/>
    </location>
    <ligand>
        <name>NADPH</name>
        <dbReference type="ChEBI" id="CHEBI:57783"/>
    </ligand>
</feature>
<feature type="binding site" evidence="1">
    <location>
        <position position="105"/>
    </location>
    <ligand>
        <name>sn-glycerol 3-phosphate</name>
        <dbReference type="ChEBI" id="CHEBI:57597"/>
    </ligand>
</feature>
<feature type="binding site" evidence="1">
    <location>
        <position position="134"/>
    </location>
    <ligand>
        <name>sn-glycerol 3-phosphate</name>
        <dbReference type="ChEBI" id="CHEBI:57597"/>
    </ligand>
</feature>
<feature type="binding site" evidence="1">
    <location>
        <position position="136"/>
    </location>
    <ligand>
        <name>sn-glycerol 3-phosphate</name>
        <dbReference type="ChEBI" id="CHEBI:57597"/>
    </ligand>
</feature>
<feature type="binding site" evidence="1">
    <location>
        <position position="138"/>
    </location>
    <ligand>
        <name>NADPH</name>
        <dbReference type="ChEBI" id="CHEBI:57783"/>
    </ligand>
</feature>
<feature type="binding site" evidence="1">
    <location>
        <position position="189"/>
    </location>
    <ligand>
        <name>sn-glycerol 3-phosphate</name>
        <dbReference type="ChEBI" id="CHEBI:57597"/>
    </ligand>
</feature>
<feature type="binding site" evidence="1">
    <location>
        <position position="242"/>
    </location>
    <ligand>
        <name>sn-glycerol 3-phosphate</name>
        <dbReference type="ChEBI" id="CHEBI:57597"/>
    </ligand>
</feature>
<feature type="binding site" evidence="1">
    <location>
        <position position="252"/>
    </location>
    <ligand>
        <name>sn-glycerol 3-phosphate</name>
        <dbReference type="ChEBI" id="CHEBI:57597"/>
    </ligand>
</feature>
<feature type="binding site" evidence="1">
    <location>
        <position position="253"/>
    </location>
    <ligand>
        <name>NADPH</name>
        <dbReference type="ChEBI" id="CHEBI:57783"/>
    </ligand>
</feature>
<feature type="binding site" evidence="1">
    <location>
        <position position="253"/>
    </location>
    <ligand>
        <name>sn-glycerol 3-phosphate</name>
        <dbReference type="ChEBI" id="CHEBI:57597"/>
    </ligand>
</feature>
<feature type="binding site" evidence="1">
    <location>
        <position position="254"/>
    </location>
    <ligand>
        <name>sn-glycerol 3-phosphate</name>
        <dbReference type="ChEBI" id="CHEBI:57597"/>
    </ligand>
</feature>
<feature type="binding site" evidence="1">
    <location>
        <position position="277"/>
    </location>
    <ligand>
        <name>NADPH</name>
        <dbReference type="ChEBI" id="CHEBI:57783"/>
    </ligand>
</feature>
<feature type="binding site" evidence="1">
    <location>
        <position position="279"/>
    </location>
    <ligand>
        <name>NADPH</name>
        <dbReference type="ChEBI" id="CHEBI:57783"/>
    </ligand>
</feature>
<reference key="1">
    <citation type="journal article" date="2000" name="Science">
        <title>Complete genome sequence of Neisseria meningitidis serogroup B strain MC58.</title>
        <authorList>
            <person name="Tettelin H."/>
            <person name="Saunders N.J."/>
            <person name="Heidelberg J.F."/>
            <person name="Jeffries A.C."/>
            <person name="Nelson K.E."/>
            <person name="Eisen J.A."/>
            <person name="Ketchum K.A."/>
            <person name="Hood D.W."/>
            <person name="Peden J.F."/>
            <person name="Dodson R.J."/>
            <person name="Nelson W.C."/>
            <person name="Gwinn M.L."/>
            <person name="DeBoy R.T."/>
            <person name="Peterson J.D."/>
            <person name="Hickey E.K."/>
            <person name="Haft D.H."/>
            <person name="Salzberg S.L."/>
            <person name="White O."/>
            <person name="Fleischmann R.D."/>
            <person name="Dougherty B.A."/>
            <person name="Mason T.M."/>
            <person name="Ciecko A."/>
            <person name="Parksey D.S."/>
            <person name="Blair E."/>
            <person name="Cittone H."/>
            <person name="Clark E.B."/>
            <person name="Cotton M.D."/>
            <person name="Utterback T.R."/>
            <person name="Khouri H.M."/>
            <person name="Qin H."/>
            <person name="Vamathevan J.J."/>
            <person name="Gill J."/>
            <person name="Scarlato V."/>
            <person name="Masignani V."/>
            <person name="Pizza M."/>
            <person name="Grandi G."/>
            <person name="Sun L."/>
            <person name="Smith H.O."/>
            <person name="Fraser C.M."/>
            <person name="Moxon E.R."/>
            <person name="Rappuoli R."/>
            <person name="Venter J.C."/>
        </authorList>
    </citation>
    <scope>NUCLEOTIDE SEQUENCE [LARGE SCALE GENOMIC DNA]</scope>
    <source>
        <strain>ATCC BAA-335 / MC58</strain>
    </source>
</reference>
<sequence length="329" mass="35338">MKITVIGAGSWGTALALHFSQHGNRVSLWTRNADQVRQMQEARENKRGLPGFSFPETLEVCADLADALKDSGLVLIVTSVAGLRSSAELLKQYGAGHLPVLAACKGFEQDTGLLTFQVLKEVLPDNKKIGVLSGPSFAQELAKQLPCAVVLASENQEWIEELVPQLNTTVMRLYGSTDVIGVAVGGAVKNVMAIATGLSDGLEYGLNARAALVTRGLAEITRLASAMGAQPKTMMGLAGIGDLILTCTGALSRNRRVGLGLAEGKELHQVLVEIGHVSEGVSTIEEVFNTACKYQIDMPITQTLLQLIRKEMTPQQVVERLMERSARFE</sequence>